<keyword id="KW-1003">Cell membrane</keyword>
<keyword id="KW-0472">Membrane</keyword>
<keyword id="KW-1185">Reference proteome</keyword>
<keyword id="KW-0808">Transferase</keyword>
<keyword id="KW-0812">Transmembrane</keyword>
<keyword id="KW-1133">Transmembrane helix</keyword>
<sequence length="322" mass="35221">MDVMTLAAIPSPPQGVWYLGPLPIRAYAMCIIAGIIVAIWLTRKRYAARGGNPEVVLDAAIVAVPAGIIGGRIYHVITDNQKYFCETCDPVDALKITNGGLGIWGAVILGGLAVWAYFRYKKIPLAPFADAVAPGVILAQAIGRLGNWFNQELYGAETDVPWALEIYYRVDENGRFAPVTGVSTGEVIATVHPTFLYEMLWNLLIFGLLIWADRRFRLGHGRVFALYVAGYTLGRFWIEQMRTDEATMVFGMRINTLVSAVVFILAVIVFLRLGKGREAPAEVDPAYHAAQAERDDTETAGLDATTGTVPGDSPETTGKKRK</sequence>
<dbReference type="EC" id="2.5.1.145" evidence="1"/>
<dbReference type="EMBL" id="BA000035">
    <property type="protein sequence ID" value="BAC18800.1"/>
    <property type="molecule type" value="Genomic_DNA"/>
</dbReference>
<dbReference type="SMR" id="Q8FP03"/>
<dbReference type="STRING" id="196164.gene:10742418"/>
<dbReference type="KEGG" id="cef:CE1990"/>
<dbReference type="eggNOG" id="COG0682">
    <property type="taxonomic scope" value="Bacteria"/>
</dbReference>
<dbReference type="HOGENOM" id="CLU_013386_2_0_11"/>
<dbReference type="OrthoDB" id="871140at2"/>
<dbReference type="UniPathway" id="UPA00664"/>
<dbReference type="Proteomes" id="UP000001409">
    <property type="component" value="Chromosome"/>
</dbReference>
<dbReference type="GO" id="GO:0005886">
    <property type="term" value="C:plasma membrane"/>
    <property type="evidence" value="ECO:0007669"/>
    <property type="project" value="UniProtKB-SubCell"/>
</dbReference>
<dbReference type="GO" id="GO:0008961">
    <property type="term" value="F:phosphatidylglycerol-prolipoprotein diacylglyceryl transferase activity"/>
    <property type="evidence" value="ECO:0007669"/>
    <property type="project" value="UniProtKB-UniRule"/>
</dbReference>
<dbReference type="GO" id="GO:0042158">
    <property type="term" value="P:lipoprotein biosynthetic process"/>
    <property type="evidence" value="ECO:0007669"/>
    <property type="project" value="UniProtKB-UniRule"/>
</dbReference>
<dbReference type="HAMAP" id="MF_01147">
    <property type="entry name" value="Lgt"/>
    <property type="match status" value="1"/>
</dbReference>
<dbReference type="InterPro" id="IPR001640">
    <property type="entry name" value="Lgt"/>
</dbReference>
<dbReference type="InterPro" id="IPR008984">
    <property type="entry name" value="SMAD_FHA_dom_sf"/>
</dbReference>
<dbReference type="NCBIfam" id="TIGR00544">
    <property type="entry name" value="lgt"/>
    <property type="match status" value="1"/>
</dbReference>
<dbReference type="PANTHER" id="PTHR30589:SF0">
    <property type="entry name" value="PHOSPHATIDYLGLYCEROL--PROLIPOPROTEIN DIACYLGLYCERYL TRANSFERASE"/>
    <property type="match status" value="1"/>
</dbReference>
<dbReference type="PANTHER" id="PTHR30589">
    <property type="entry name" value="PROLIPOPROTEIN DIACYLGLYCERYL TRANSFERASE"/>
    <property type="match status" value="1"/>
</dbReference>
<dbReference type="Pfam" id="PF01790">
    <property type="entry name" value="LGT"/>
    <property type="match status" value="1"/>
</dbReference>
<dbReference type="SUPFAM" id="SSF49879">
    <property type="entry name" value="SMAD/FHA domain"/>
    <property type="match status" value="1"/>
</dbReference>
<dbReference type="PROSITE" id="PS01311">
    <property type="entry name" value="LGT"/>
    <property type="match status" value="1"/>
</dbReference>
<comment type="function">
    <text evidence="1">Catalyzes the transfer of the diacylglyceryl group from phosphatidylglycerol to the sulfhydryl group of the N-terminal cysteine of a prolipoprotein, the first step in the formation of mature lipoproteins.</text>
</comment>
<comment type="catalytic activity">
    <reaction evidence="1">
        <text>L-cysteinyl-[prolipoprotein] + a 1,2-diacyl-sn-glycero-3-phospho-(1'-sn-glycerol) = an S-1,2-diacyl-sn-glyceryl-L-cysteinyl-[prolipoprotein] + sn-glycerol 1-phosphate + H(+)</text>
        <dbReference type="Rhea" id="RHEA:56712"/>
        <dbReference type="Rhea" id="RHEA-COMP:14679"/>
        <dbReference type="Rhea" id="RHEA-COMP:14680"/>
        <dbReference type="ChEBI" id="CHEBI:15378"/>
        <dbReference type="ChEBI" id="CHEBI:29950"/>
        <dbReference type="ChEBI" id="CHEBI:57685"/>
        <dbReference type="ChEBI" id="CHEBI:64716"/>
        <dbReference type="ChEBI" id="CHEBI:140658"/>
        <dbReference type="EC" id="2.5.1.145"/>
    </reaction>
</comment>
<comment type="pathway">
    <text evidence="1">Protein modification; lipoprotein biosynthesis (diacylglyceryl transfer).</text>
</comment>
<comment type="subcellular location">
    <subcellularLocation>
        <location evidence="1">Cell membrane</location>
        <topology evidence="1">Multi-pass membrane protein</topology>
    </subcellularLocation>
</comment>
<comment type="similarity">
    <text evidence="1">Belongs to the Lgt family.</text>
</comment>
<accession>Q8FP03</accession>
<feature type="chain" id="PRO_0000172590" description="Phosphatidylglycerol--prolipoprotein diacylglyceryl transferase">
    <location>
        <begin position="1"/>
        <end position="322"/>
    </location>
</feature>
<feature type="transmembrane region" description="Helical" evidence="1">
    <location>
        <begin position="21"/>
        <end position="41"/>
    </location>
</feature>
<feature type="transmembrane region" description="Helical" evidence="1">
    <location>
        <begin position="50"/>
        <end position="70"/>
    </location>
</feature>
<feature type="transmembrane region" description="Helical" evidence="1">
    <location>
        <begin position="98"/>
        <end position="118"/>
    </location>
</feature>
<feature type="transmembrane region" description="Helical" evidence="1">
    <location>
        <begin position="123"/>
        <end position="143"/>
    </location>
</feature>
<feature type="transmembrane region" description="Helical" evidence="1">
    <location>
        <begin position="191"/>
        <end position="211"/>
    </location>
</feature>
<feature type="transmembrane region" description="Helical" evidence="1">
    <location>
        <begin position="254"/>
        <end position="274"/>
    </location>
</feature>
<feature type="region of interest" description="Disordered" evidence="2">
    <location>
        <begin position="283"/>
        <end position="322"/>
    </location>
</feature>
<feature type="binding site" evidence="1">
    <location>
        <position position="144"/>
    </location>
    <ligand>
        <name>a 1,2-diacyl-sn-glycero-3-phospho-(1'-sn-glycerol)</name>
        <dbReference type="ChEBI" id="CHEBI:64716"/>
    </ligand>
</feature>
<gene>
    <name evidence="1" type="primary">lgt</name>
    <name type="ordered locus">CE1990</name>
</gene>
<proteinExistence type="inferred from homology"/>
<organism>
    <name type="scientific">Corynebacterium efficiens (strain DSM 44549 / YS-314 / AJ 12310 / JCM 11189 / NBRC 100395)</name>
    <dbReference type="NCBI Taxonomy" id="196164"/>
    <lineage>
        <taxon>Bacteria</taxon>
        <taxon>Bacillati</taxon>
        <taxon>Actinomycetota</taxon>
        <taxon>Actinomycetes</taxon>
        <taxon>Mycobacteriales</taxon>
        <taxon>Corynebacteriaceae</taxon>
        <taxon>Corynebacterium</taxon>
    </lineage>
</organism>
<reference key="1">
    <citation type="journal article" date="2003" name="Genome Res.">
        <title>Comparative complete genome sequence analysis of the amino acid replacements responsible for the thermostability of Corynebacterium efficiens.</title>
        <authorList>
            <person name="Nishio Y."/>
            <person name="Nakamura Y."/>
            <person name="Kawarabayasi Y."/>
            <person name="Usuda Y."/>
            <person name="Kimura E."/>
            <person name="Sugimoto S."/>
            <person name="Matsui K."/>
            <person name="Yamagishi A."/>
            <person name="Kikuchi H."/>
            <person name="Ikeo K."/>
            <person name="Gojobori T."/>
        </authorList>
    </citation>
    <scope>NUCLEOTIDE SEQUENCE [LARGE SCALE GENOMIC DNA]</scope>
    <source>
        <strain>DSM 44549 / YS-314 / AJ 12310 / JCM 11189 / NBRC 100395</strain>
    </source>
</reference>
<protein>
    <recommendedName>
        <fullName evidence="1">Phosphatidylglycerol--prolipoprotein diacylglyceryl transferase</fullName>
        <ecNumber evidence="1">2.5.1.145</ecNumber>
    </recommendedName>
</protein>
<evidence type="ECO:0000255" key="1">
    <source>
        <dbReference type="HAMAP-Rule" id="MF_01147"/>
    </source>
</evidence>
<evidence type="ECO:0000256" key="2">
    <source>
        <dbReference type="SAM" id="MobiDB-lite"/>
    </source>
</evidence>
<name>LGT_COREF</name>